<dbReference type="EMBL" id="CP017629">
    <property type="protein sequence ID" value="AOW30522.1"/>
    <property type="molecule type" value="Genomic_DNA"/>
</dbReference>
<dbReference type="RefSeq" id="XP_721406.1">
    <property type="nucleotide sequence ID" value="XM_716313.1"/>
</dbReference>
<dbReference type="SMR" id="Q5AGW8"/>
<dbReference type="STRING" id="237561.Q5AGW8"/>
<dbReference type="EnsemblFungi" id="C7_01560C_A-T">
    <property type="protein sequence ID" value="C7_01560C_A-T-p1"/>
    <property type="gene ID" value="C7_01560C_A"/>
</dbReference>
<dbReference type="GeneID" id="3637041"/>
<dbReference type="KEGG" id="cal:CAALFM_C701560CA"/>
<dbReference type="CGD" id="CAL0000196928">
    <property type="gene designation" value="NUP"/>
</dbReference>
<dbReference type="VEuPathDB" id="FungiDB:C7_01560C_A"/>
<dbReference type="eggNOG" id="ENOG502QQPU">
    <property type="taxonomic scope" value="Eukaryota"/>
</dbReference>
<dbReference type="HOGENOM" id="CLU_031475_0_1_1"/>
<dbReference type="InParanoid" id="Q5AGW8"/>
<dbReference type="OMA" id="WAHYLVE"/>
<dbReference type="OrthoDB" id="2331083at2759"/>
<dbReference type="Proteomes" id="UP000000559">
    <property type="component" value="Chromosome 7"/>
</dbReference>
<dbReference type="GO" id="GO:0003824">
    <property type="term" value="F:catalytic activity"/>
    <property type="evidence" value="ECO:0007669"/>
    <property type="project" value="InterPro"/>
</dbReference>
<dbReference type="GO" id="GO:0015506">
    <property type="term" value="F:nucleoside:proton symporter activity"/>
    <property type="evidence" value="ECO:0000314"/>
    <property type="project" value="CGD"/>
</dbReference>
<dbReference type="GO" id="GO:0009116">
    <property type="term" value="P:nucleoside metabolic process"/>
    <property type="evidence" value="ECO:0007669"/>
    <property type="project" value="InterPro"/>
</dbReference>
<dbReference type="GO" id="GO:0015858">
    <property type="term" value="P:nucleoside transport"/>
    <property type="evidence" value="ECO:0000314"/>
    <property type="project" value="CGD"/>
</dbReference>
<dbReference type="FunFam" id="3.40.50.1580:FF:000023">
    <property type="entry name" value="Purine nucleoside permease"/>
    <property type="match status" value="1"/>
</dbReference>
<dbReference type="Gene3D" id="3.40.50.1580">
    <property type="entry name" value="Nucleoside phosphorylase domain"/>
    <property type="match status" value="1"/>
</dbReference>
<dbReference type="InterPro" id="IPR035994">
    <property type="entry name" value="Nucleoside_phosphorylase_sf"/>
</dbReference>
<dbReference type="InterPro" id="IPR009486">
    <property type="entry name" value="Pur_nuclsid_perm"/>
</dbReference>
<dbReference type="PANTHER" id="PTHR38643">
    <property type="entry name" value="PURINE NUCLEOSIDE PERMEASE C285.05-RELATED"/>
    <property type="match status" value="1"/>
</dbReference>
<dbReference type="PANTHER" id="PTHR38643:SF1">
    <property type="entry name" value="PURINE NUCLEOSIDE PERMEASE C285.05-RELATED"/>
    <property type="match status" value="1"/>
</dbReference>
<dbReference type="Pfam" id="PF06516">
    <property type="entry name" value="NUP"/>
    <property type="match status" value="1"/>
</dbReference>
<dbReference type="PIRSF" id="PIRSF013171">
    <property type="entry name" value="Pur_nuclsid_perm"/>
    <property type="match status" value="1"/>
</dbReference>
<feature type="signal peptide" evidence="1">
    <location>
        <begin position="1"/>
        <end position="22"/>
    </location>
</feature>
<feature type="chain" id="PRO_0000431101" description="Purine nucleoside permease" evidence="1">
    <location>
        <begin position="23"/>
        <end position="406"/>
    </location>
</feature>
<proteinExistence type="evidence at protein level"/>
<reference key="1">
    <citation type="journal article" date="2004" name="Proc. Natl. Acad. Sci. U.S.A.">
        <title>The diploid genome sequence of Candida albicans.</title>
        <authorList>
            <person name="Jones T."/>
            <person name="Federspiel N.A."/>
            <person name="Chibana H."/>
            <person name="Dungan J."/>
            <person name="Kalman S."/>
            <person name="Magee B.B."/>
            <person name="Newport G."/>
            <person name="Thorstenson Y.R."/>
            <person name="Agabian N."/>
            <person name="Magee P.T."/>
            <person name="Davis R.W."/>
            <person name="Scherer S."/>
        </authorList>
    </citation>
    <scope>NUCLEOTIDE SEQUENCE [LARGE SCALE GENOMIC DNA]</scope>
    <source>
        <strain>SC5314 / ATCC MYA-2876</strain>
    </source>
</reference>
<reference key="2">
    <citation type="journal article" date="2007" name="Genome Biol.">
        <title>Assembly of the Candida albicans genome into sixteen supercontigs aligned on the eight chromosomes.</title>
        <authorList>
            <person name="van het Hoog M."/>
            <person name="Rast T.J."/>
            <person name="Martchenko M."/>
            <person name="Grindle S."/>
            <person name="Dignard D."/>
            <person name="Hogues H."/>
            <person name="Cuomo C."/>
            <person name="Berriman M."/>
            <person name="Scherer S."/>
            <person name="Magee B.B."/>
            <person name="Whiteway M."/>
            <person name="Chibana H."/>
            <person name="Nantel A."/>
            <person name="Magee P.T."/>
        </authorList>
    </citation>
    <scope>GENOME REANNOTATION</scope>
    <source>
        <strain>SC5314 / ATCC MYA-2876</strain>
    </source>
</reference>
<reference key="3">
    <citation type="journal article" date="2013" name="Genome Biol.">
        <title>Assembly of a phased diploid Candida albicans genome facilitates allele-specific measurements and provides a simple model for repeat and indel structure.</title>
        <authorList>
            <person name="Muzzey D."/>
            <person name="Schwartz K."/>
            <person name="Weissman J.S."/>
            <person name="Sherlock G."/>
        </authorList>
    </citation>
    <scope>NUCLEOTIDE SEQUENCE [LARGE SCALE GENOMIC DNA]</scope>
    <scope>GENOME REANNOTATION</scope>
    <source>
        <strain>SC5314 / ATCC MYA-2876</strain>
    </source>
</reference>
<reference key="4">
    <citation type="journal article" date="1998" name="Yeast">
        <title>Cloning of the Candida albicans nucleoside transporter by complementation of nucleoside transport-deficient Saccharomyces.</title>
        <authorList>
            <person name="Detke S."/>
        </authorList>
    </citation>
    <scope>FUNCTION</scope>
    <scope>ACTIVITY REGULATION</scope>
</reference>
<reference key="5">
    <citation type="journal article" date="2003" name="J. Biol. Chem.">
        <title>Inactivation of Kex2p diminishes the virulence of Candida albicans.</title>
        <authorList>
            <person name="Newport G."/>
            <person name="Kuo A."/>
            <person name="Flattery A."/>
            <person name="Gill C."/>
            <person name="Blake J.J."/>
            <person name="Kurtz M.B."/>
            <person name="Abruzzo G.K."/>
            <person name="Agabian N."/>
        </authorList>
    </citation>
    <scope>PREDICTION AS A SUBSTRATE FOR KEX2 CLEAVAGE</scope>
</reference>
<organism>
    <name type="scientific">Candida albicans (strain SC5314 / ATCC MYA-2876)</name>
    <name type="common">Yeast</name>
    <dbReference type="NCBI Taxonomy" id="237561"/>
    <lineage>
        <taxon>Eukaryota</taxon>
        <taxon>Fungi</taxon>
        <taxon>Dikarya</taxon>
        <taxon>Ascomycota</taxon>
        <taxon>Saccharomycotina</taxon>
        <taxon>Pichiomycetes</taxon>
        <taxon>Debaryomycetaceae</taxon>
        <taxon>Candida/Lodderomyces clade</taxon>
        <taxon>Candida</taxon>
    </lineage>
</organism>
<name>NUP_CANAL</name>
<comment type="function">
    <text evidence="2">Nucleoside permease that transports adenosine and guanosine. Does not show any transport activities towards cytidine, adenine, guanine, uridine, and uracil.</text>
</comment>
<comment type="activity regulation">
    <text evidence="2">Mammalian nucleoside transport inhibitors dipyridamole and NBMPR inhibit adenosine transport by NUP.</text>
</comment>
<comment type="PTM">
    <text>Predicted to be a substrate for cleavage by KEX2.</text>
</comment>
<comment type="similarity">
    <text evidence="4">Belongs to the NUP family.</text>
</comment>
<protein>
    <recommendedName>
        <fullName evidence="3">Purine nucleoside permease</fullName>
    </recommendedName>
</protein>
<sequence length="406" mass="44863">MKLSTLFTLATTISTLTTFTIASPVVVVEKRAINETALAEDIPTTKNNHAQTSYGKPFAIYQPKAFIISMFSLERDPWLKAMDFVHNITIPGLSPVYPDIHCTTNYTICQITTGEGEINAASSISALTLNPLFDLTKTYFLVGGIAGGEPNYTTIGGVTFAKYAVQVGLEYQLAYEDYHKTNPDWISGYIPYGTDDQNTYPGNVYGTEVFEVNEKLRDRAVELASKVHLNNGTEGNAKFRKLYNETAAQGLPKVVKCDSLTSDNYFTGNVLNDYFANFTLLMTNGSATYCSTAQEDNATLEVMTRLAKHGLVDYDRIMIMRTISDFSRPPPSMSAYEYFFNRSDGGISASLENLVIAGTPIIHDIVQNWDKIYESGEKYSSKNYVGDIFATLGGKPDFGKESFDTA</sequence>
<accession>Q5AGW8</accession>
<accession>A0A1D8PQV9</accession>
<accession>Q3MPI4</accession>
<evidence type="ECO:0000255" key="1"/>
<evidence type="ECO:0000269" key="2">
    <source>
    </source>
</evidence>
<evidence type="ECO:0000303" key="3">
    <source>
    </source>
</evidence>
<evidence type="ECO:0000305" key="4"/>
<keyword id="KW-1185">Reference proteome</keyword>
<keyword id="KW-0732">Signal</keyword>
<keyword id="KW-0813">Transport</keyword>
<gene>
    <name evidence="3" type="primary">NUP</name>
    <name type="synonym">NUP32</name>
    <name type="ordered locus">CAALFM_C701560CA</name>
    <name type="ORF">CaO19.13923</name>
    <name type="ORF">CaO19.6570</name>
</gene>